<accession>Q4WVI6</accession>
<feature type="chain" id="PRO_0000393324" description="MYND-type zinc finger protein samB">
    <location>
        <begin position="1"/>
        <end position="605"/>
    </location>
</feature>
<feature type="zinc finger region" description="MYND-type; degenerate" evidence="2">
    <location>
        <begin position="560"/>
        <end position="601"/>
    </location>
</feature>
<feature type="region of interest" description="Disordered" evidence="3">
    <location>
        <begin position="134"/>
        <end position="187"/>
    </location>
</feature>
<feature type="region of interest" description="Disordered" evidence="3">
    <location>
        <begin position="203"/>
        <end position="352"/>
    </location>
</feature>
<feature type="compositionally biased region" description="Polar residues" evidence="3">
    <location>
        <begin position="279"/>
        <end position="315"/>
    </location>
</feature>
<feature type="compositionally biased region" description="Acidic residues" evidence="3">
    <location>
        <begin position="320"/>
        <end position="336"/>
    </location>
</feature>
<feature type="binding site" evidence="2">
    <location>
        <position position="576"/>
    </location>
    <ligand>
        <name>Zn(2+)</name>
        <dbReference type="ChEBI" id="CHEBI:29105"/>
    </ligand>
</feature>
<feature type="binding site" evidence="2">
    <location>
        <position position="579"/>
    </location>
    <ligand>
        <name>Zn(2+)</name>
        <dbReference type="ChEBI" id="CHEBI:29105"/>
    </ligand>
</feature>
<feature type="binding site" evidence="2">
    <location>
        <position position="597"/>
    </location>
    <ligand>
        <name>Zn(2+)</name>
        <dbReference type="ChEBI" id="CHEBI:29105"/>
    </ligand>
</feature>
<feature type="binding site" evidence="2">
    <location>
        <position position="601"/>
    </location>
    <ligand>
        <name>Zn(2+)</name>
        <dbReference type="ChEBI" id="CHEBI:29105"/>
    </ligand>
</feature>
<evidence type="ECO:0000250" key="1"/>
<evidence type="ECO:0000255" key="2">
    <source>
        <dbReference type="PROSITE-ProRule" id="PRU00134"/>
    </source>
</evidence>
<evidence type="ECO:0000256" key="3">
    <source>
        <dbReference type="SAM" id="MobiDB-lite"/>
    </source>
</evidence>
<evidence type="ECO:0000305" key="4"/>
<organism>
    <name type="scientific">Aspergillus fumigatus (strain ATCC MYA-4609 / CBS 101355 / FGSC A1100 / Af293)</name>
    <name type="common">Neosartorya fumigata</name>
    <dbReference type="NCBI Taxonomy" id="330879"/>
    <lineage>
        <taxon>Eukaryota</taxon>
        <taxon>Fungi</taxon>
        <taxon>Dikarya</taxon>
        <taxon>Ascomycota</taxon>
        <taxon>Pezizomycotina</taxon>
        <taxon>Eurotiomycetes</taxon>
        <taxon>Eurotiomycetidae</taxon>
        <taxon>Eurotiales</taxon>
        <taxon>Aspergillaceae</taxon>
        <taxon>Aspergillus</taxon>
        <taxon>Aspergillus subgen. Fumigati</taxon>
    </lineage>
</organism>
<sequence length="605" mass="67975">MREVNFNIPNVNKASVNITTTLYDRRALDCTSTLPLINSLNHLAYLTTSSARIRDILTVDGGIERLVCILKEGRSRDLMEMWKWSLAFQCVVNIGVRGSESVRTRVVEADMVPVIATILDNYIKVVDKARARADSESQRQSSRHHSKAVPTSNDVSGRPSFLEQPLTAEQRTSRRHAPPSIEIPPQPFFQENHVADSNVLDVTSPSRVPMTSPPERSAFGQDVHHRRTNDGRFAHGNHRHRMQPLATALPSMDATDGFGLRPVRDNERLPSMLPGFHTGLTSQPDSPTTPNAPVQPRSSAQATIARQRPSLRQQQSASGESDDGNGDGSTMDEDPASTEAAEPIVGLQNRMDIDDVGDRDTILGGVSDSHDLTVTDPSEEQEAETFNITHRSTVDGSMINTDNAQNNAALGLSPTQAADNANSPALVPSPYSLYFRDRTTTAAHGVLTTMPRDEDVLMSLQLLAYVSKYCNLRSYFQHSHFVPKLKIDRELQMLEEGTSPIEFPEDEDEYLLPDDVNIFPLVEKFTVRHHSKDMQYWACVVMRNLCRKDESRGGIRQCAYYKCGKWEEFQRQFAKCRRCRRTKYCSKDCQKAAWVYHRHWCHTTP</sequence>
<name>MUB1_ASPFU</name>
<proteinExistence type="inferred from homology"/>
<gene>
    <name type="primary">samB</name>
    <name type="ORF">AFUA_5G12230</name>
</gene>
<comment type="function">
    <text evidence="1">Involved in determination of the onset of polarized growth and morphogenesis. Plays a role in the regulation of branching in hyphae and spore formation (By similarity).</text>
</comment>
<comment type="subcellular location">
    <subcellularLocation>
        <location evidence="1">Cytoplasm</location>
    </subcellularLocation>
</comment>
<comment type="similarity">
    <text evidence="4">Belongs to the MUB1/samB family.</text>
</comment>
<reference key="1">
    <citation type="journal article" date="2005" name="Nature">
        <title>Genomic sequence of the pathogenic and allergenic filamentous fungus Aspergillus fumigatus.</title>
        <authorList>
            <person name="Nierman W.C."/>
            <person name="Pain A."/>
            <person name="Anderson M.J."/>
            <person name="Wortman J.R."/>
            <person name="Kim H.S."/>
            <person name="Arroyo J."/>
            <person name="Berriman M."/>
            <person name="Abe K."/>
            <person name="Archer D.B."/>
            <person name="Bermejo C."/>
            <person name="Bennett J.W."/>
            <person name="Bowyer P."/>
            <person name="Chen D."/>
            <person name="Collins M."/>
            <person name="Coulsen R."/>
            <person name="Davies R."/>
            <person name="Dyer P.S."/>
            <person name="Farman M.L."/>
            <person name="Fedorova N."/>
            <person name="Fedorova N.D."/>
            <person name="Feldblyum T.V."/>
            <person name="Fischer R."/>
            <person name="Fosker N."/>
            <person name="Fraser A."/>
            <person name="Garcia J.L."/>
            <person name="Garcia M.J."/>
            <person name="Goble A."/>
            <person name="Goldman G.H."/>
            <person name="Gomi K."/>
            <person name="Griffith-Jones S."/>
            <person name="Gwilliam R."/>
            <person name="Haas B.J."/>
            <person name="Haas H."/>
            <person name="Harris D.E."/>
            <person name="Horiuchi H."/>
            <person name="Huang J."/>
            <person name="Humphray S."/>
            <person name="Jimenez J."/>
            <person name="Keller N."/>
            <person name="Khouri H."/>
            <person name="Kitamoto K."/>
            <person name="Kobayashi T."/>
            <person name="Konzack S."/>
            <person name="Kulkarni R."/>
            <person name="Kumagai T."/>
            <person name="Lafton A."/>
            <person name="Latge J.-P."/>
            <person name="Li W."/>
            <person name="Lord A."/>
            <person name="Lu C."/>
            <person name="Majoros W.H."/>
            <person name="May G.S."/>
            <person name="Miller B.L."/>
            <person name="Mohamoud Y."/>
            <person name="Molina M."/>
            <person name="Monod M."/>
            <person name="Mouyna I."/>
            <person name="Mulligan S."/>
            <person name="Murphy L.D."/>
            <person name="O'Neil S."/>
            <person name="Paulsen I."/>
            <person name="Penalva M.A."/>
            <person name="Pertea M."/>
            <person name="Price C."/>
            <person name="Pritchard B.L."/>
            <person name="Quail M.A."/>
            <person name="Rabbinowitsch E."/>
            <person name="Rawlins N."/>
            <person name="Rajandream M.A."/>
            <person name="Reichard U."/>
            <person name="Renauld H."/>
            <person name="Robson G.D."/>
            <person name="Rodriguez de Cordoba S."/>
            <person name="Rodriguez-Pena J.M."/>
            <person name="Ronning C.M."/>
            <person name="Rutter S."/>
            <person name="Salzberg S.L."/>
            <person name="Sanchez M."/>
            <person name="Sanchez-Ferrero J.C."/>
            <person name="Saunders D."/>
            <person name="Seeger K."/>
            <person name="Squares R."/>
            <person name="Squares S."/>
            <person name="Takeuchi M."/>
            <person name="Tekaia F."/>
            <person name="Turner G."/>
            <person name="Vazquez de Aldana C.R."/>
            <person name="Weidman J."/>
            <person name="White O."/>
            <person name="Woodward J.R."/>
            <person name="Yu J.-H."/>
            <person name="Fraser C.M."/>
            <person name="Galagan J.E."/>
            <person name="Asai K."/>
            <person name="Machida M."/>
            <person name="Hall N."/>
            <person name="Barrell B.G."/>
            <person name="Denning D.W."/>
        </authorList>
    </citation>
    <scope>NUCLEOTIDE SEQUENCE [LARGE SCALE GENOMIC DNA]</scope>
    <source>
        <strain>ATCC MYA-4609 / CBS 101355 / FGSC A1100 / Af293</strain>
    </source>
</reference>
<dbReference type="EMBL" id="AAHF01000003">
    <property type="protein sequence ID" value="EAL91390.1"/>
    <property type="molecule type" value="Genomic_DNA"/>
</dbReference>
<dbReference type="RefSeq" id="XP_753428.1">
    <property type="nucleotide sequence ID" value="XM_748335.1"/>
</dbReference>
<dbReference type="SMR" id="Q4WVI6"/>
<dbReference type="FunCoup" id="Q4WVI6">
    <property type="interactions" value="71"/>
</dbReference>
<dbReference type="EnsemblFungi" id="EAL91390">
    <property type="protein sequence ID" value="EAL91390"/>
    <property type="gene ID" value="AFUA_5G12230"/>
</dbReference>
<dbReference type="GeneID" id="3511434"/>
<dbReference type="KEGG" id="afm:AFUA_5G12230"/>
<dbReference type="VEuPathDB" id="FungiDB:Afu5g12230"/>
<dbReference type="eggNOG" id="ENOG502QTM3">
    <property type="taxonomic scope" value="Eukaryota"/>
</dbReference>
<dbReference type="HOGENOM" id="CLU_014851_0_0_1"/>
<dbReference type="InParanoid" id="Q4WVI6"/>
<dbReference type="OMA" id="QDMQYWA"/>
<dbReference type="OrthoDB" id="5594178at2759"/>
<dbReference type="Proteomes" id="UP000002530">
    <property type="component" value="Chromosome 5"/>
</dbReference>
<dbReference type="GO" id="GO:0005737">
    <property type="term" value="C:cytoplasm"/>
    <property type="evidence" value="ECO:0007669"/>
    <property type="project" value="UniProtKB-SubCell"/>
</dbReference>
<dbReference type="GO" id="GO:1990304">
    <property type="term" value="C:MUB1-RAD6-UBR2 ubiquitin ligase complex"/>
    <property type="evidence" value="ECO:0000318"/>
    <property type="project" value="GO_Central"/>
</dbReference>
<dbReference type="GO" id="GO:0008270">
    <property type="term" value="F:zinc ion binding"/>
    <property type="evidence" value="ECO:0007669"/>
    <property type="project" value="UniProtKB-KW"/>
</dbReference>
<dbReference type="GO" id="GO:0007163">
    <property type="term" value="P:establishment or maintenance of cell polarity"/>
    <property type="evidence" value="ECO:0000318"/>
    <property type="project" value="GO_Central"/>
</dbReference>
<dbReference type="GO" id="GO:1900735">
    <property type="term" value="P:positive regulation of flocculation"/>
    <property type="evidence" value="ECO:0007669"/>
    <property type="project" value="EnsemblFungi"/>
</dbReference>
<dbReference type="GO" id="GO:0030435">
    <property type="term" value="P:sporulation resulting in formation of a cellular spore"/>
    <property type="evidence" value="ECO:0007669"/>
    <property type="project" value="UniProtKB-KW"/>
</dbReference>
<dbReference type="GO" id="GO:0006511">
    <property type="term" value="P:ubiquitin-dependent protein catabolic process"/>
    <property type="evidence" value="ECO:0000318"/>
    <property type="project" value="GO_Central"/>
</dbReference>
<dbReference type="FunFam" id="6.10.140.2220:FF:000003">
    <property type="entry name" value="MYND-type zinc finger protein"/>
    <property type="match status" value="1"/>
</dbReference>
<dbReference type="Gene3D" id="6.10.140.2220">
    <property type="match status" value="1"/>
</dbReference>
<dbReference type="InterPro" id="IPR016024">
    <property type="entry name" value="ARM-type_fold"/>
</dbReference>
<dbReference type="InterPro" id="IPR051664">
    <property type="entry name" value="MYND-type_zinc_finger"/>
</dbReference>
<dbReference type="InterPro" id="IPR002893">
    <property type="entry name" value="Znf_MYND"/>
</dbReference>
<dbReference type="PANTHER" id="PTHR47442">
    <property type="entry name" value="MYND-TYPE ZINC FINGER PROTEIN MUB1"/>
    <property type="match status" value="1"/>
</dbReference>
<dbReference type="PANTHER" id="PTHR47442:SF1">
    <property type="entry name" value="MYND-TYPE ZINC FINGER PROTEIN MUB1"/>
    <property type="match status" value="1"/>
</dbReference>
<dbReference type="Pfam" id="PF01753">
    <property type="entry name" value="zf-MYND"/>
    <property type="match status" value="1"/>
</dbReference>
<dbReference type="SUPFAM" id="SSF48371">
    <property type="entry name" value="ARM repeat"/>
    <property type="match status" value="1"/>
</dbReference>
<dbReference type="SUPFAM" id="SSF144232">
    <property type="entry name" value="HIT/MYND zinc finger-like"/>
    <property type="match status" value="1"/>
</dbReference>
<dbReference type="PROSITE" id="PS01360">
    <property type="entry name" value="ZF_MYND_1"/>
    <property type="match status" value="1"/>
</dbReference>
<dbReference type="PROSITE" id="PS50865">
    <property type="entry name" value="ZF_MYND_2"/>
    <property type="match status" value="1"/>
</dbReference>
<keyword id="KW-0963">Cytoplasm</keyword>
<keyword id="KW-0479">Metal-binding</keyword>
<keyword id="KW-1185">Reference proteome</keyword>
<keyword id="KW-0749">Sporulation</keyword>
<keyword id="KW-0862">Zinc</keyword>
<keyword id="KW-0863">Zinc-finger</keyword>
<protein>
    <recommendedName>
        <fullName>MYND-type zinc finger protein samB</fullName>
    </recommendedName>
    <alternativeName>
        <fullName>Suppressor of anucleate metulae protein B</fullName>
    </alternativeName>
</protein>